<proteinExistence type="inferred from homology"/>
<accession>Q475R5</accession>
<keyword id="KW-0963">Cytoplasm</keyword>
<keyword id="KW-0227">DNA damage</keyword>
<keyword id="KW-0233">DNA recombination</keyword>
<keyword id="KW-0234">DNA repair</keyword>
<keyword id="KW-0238">DNA-binding</keyword>
<keyword id="KW-0255">Endonuclease</keyword>
<keyword id="KW-0378">Hydrolase</keyword>
<keyword id="KW-0460">Magnesium</keyword>
<keyword id="KW-0479">Metal-binding</keyword>
<keyword id="KW-0540">Nuclease</keyword>
<comment type="function">
    <text evidence="1">The RuvA-RuvB-RuvC complex processes Holliday junction (HJ) DNA during genetic recombination and DNA repair. Endonuclease that resolves HJ intermediates. Cleaves cruciform DNA by making single-stranded nicks across the HJ at symmetrical positions within the homologous arms, yielding a 5'-phosphate and a 3'-hydroxyl group; requires a central core of homology in the junction. The consensus cleavage sequence is 5'-(A/T)TT(C/G)-3'. Cleavage occurs on the 3'-side of the TT dinucleotide at the point of strand exchange. HJ branch migration catalyzed by RuvA-RuvB allows RuvC to scan DNA until it finds its consensus sequence, where it cleaves and resolves the cruciform DNA.</text>
</comment>
<comment type="catalytic activity">
    <reaction evidence="1">
        <text>Endonucleolytic cleavage at a junction such as a reciprocal single-stranded crossover between two homologous DNA duplexes (Holliday junction).</text>
        <dbReference type="EC" id="3.1.21.10"/>
    </reaction>
</comment>
<comment type="cofactor">
    <cofactor evidence="1">
        <name>Mg(2+)</name>
        <dbReference type="ChEBI" id="CHEBI:18420"/>
    </cofactor>
    <text evidence="1">Binds 2 Mg(2+) ion per subunit.</text>
</comment>
<comment type="subunit">
    <text evidence="1">Homodimer which binds Holliday junction (HJ) DNA. The HJ becomes 2-fold symmetrical on binding to RuvC with unstacked arms; it has a different conformation from HJ DNA in complex with RuvA. In the full resolvosome a probable DNA-RuvA(4)-RuvB(12)-RuvC(2) complex forms which resolves the HJ.</text>
</comment>
<comment type="subcellular location">
    <subcellularLocation>
        <location evidence="1">Cytoplasm</location>
    </subcellularLocation>
</comment>
<comment type="similarity">
    <text evidence="1">Belongs to the RuvC family.</text>
</comment>
<protein>
    <recommendedName>
        <fullName evidence="1">Crossover junction endodeoxyribonuclease RuvC</fullName>
        <ecNumber evidence="1">3.1.21.10</ecNumber>
    </recommendedName>
    <alternativeName>
        <fullName evidence="1">Holliday junction nuclease RuvC</fullName>
    </alternativeName>
    <alternativeName>
        <fullName evidence="1">Holliday junction resolvase RuvC</fullName>
    </alternativeName>
</protein>
<name>RUVC_CUPPJ</name>
<reference key="1">
    <citation type="journal article" date="2010" name="PLoS ONE">
        <title>The complete multipartite genome sequence of Cupriavidus necator JMP134, a versatile pollutant degrader.</title>
        <authorList>
            <person name="Lykidis A."/>
            <person name="Perez-Pantoja D."/>
            <person name="Ledger T."/>
            <person name="Mavromatis K."/>
            <person name="Anderson I.J."/>
            <person name="Ivanova N.N."/>
            <person name="Hooper S.D."/>
            <person name="Lapidus A."/>
            <person name="Lucas S."/>
            <person name="Gonzalez B."/>
            <person name="Kyrpides N.C."/>
        </authorList>
    </citation>
    <scope>NUCLEOTIDE SEQUENCE [LARGE SCALE GENOMIC DNA]</scope>
    <source>
        <strain>JMP134 / LMG 1197</strain>
    </source>
</reference>
<feature type="chain" id="PRO_0000225169" description="Crossover junction endodeoxyribonuclease RuvC">
    <location>
        <begin position="1"/>
        <end position="181"/>
    </location>
</feature>
<feature type="active site" evidence="1">
    <location>
        <position position="7"/>
    </location>
</feature>
<feature type="active site" evidence="1">
    <location>
        <position position="67"/>
    </location>
</feature>
<feature type="active site" evidence="1">
    <location>
        <position position="139"/>
    </location>
</feature>
<feature type="binding site" evidence="1">
    <location>
        <position position="7"/>
    </location>
    <ligand>
        <name>Mg(2+)</name>
        <dbReference type="ChEBI" id="CHEBI:18420"/>
        <label>1</label>
    </ligand>
</feature>
<feature type="binding site" evidence="1">
    <location>
        <position position="67"/>
    </location>
    <ligand>
        <name>Mg(2+)</name>
        <dbReference type="ChEBI" id="CHEBI:18420"/>
        <label>2</label>
    </ligand>
</feature>
<feature type="binding site" evidence="1">
    <location>
        <position position="139"/>
    </location>
    <ligand>
        <name>Mg(2+)</name>
        <dbReference type="ChEBI" id="CHEBI:18420"/>
        <label>1</label>
    </ligand>
</feature>
<organism>
    <name type="scientific">Cupriavidus pinatubonensis (strain JMP 134 / LMG 1197)</name>
    <name type="common">Cupriavidus necator (strain JMP 134)</name>
    <dbReference type="NCBI Taxonomy" id="264198"/>
    <lineage>
        <taxon>Bacteria</taxon>
        <taxon>Pseudomonadati</taxon>
        <taxon>Pseudomonadota</taxon>
        <taxon>Betaproteobacteria</taxon>
        <taxon>Burkholderiales</taxon>
        <taxon>Burkholderiaceae</taxon>
        <taxon>Cupriavidus</taxon>
    </lineage>
</organism>
<dbReference type="EC" id="3.1.21.10" evidence="1"/>
<dbReference type="EMBL" id="CP000090">
    <property type="protein sequence ID" value="AAZ59868.1"/>
    <property type="molecule type" value="Genomic_DNA"/>
</dbReference>
<dbReference type="SMR" id="Q475R5"/>
<dbReference type="STRING" id="264198.Reut_A0486"/>
<dbReference type="KEGG" id="reu:Reut_A0486"/>
<dbReference type="eggNOG" id="COG0817">
    <property type="taxonomic scope" value="Bacteria"/>
</dbReference>
<dbReference type="HOGENOM" id="CLU_091257_2_0_4"/>
<dbReference type="OrthoDB" id="9805499at2"/>
<dbReference type="GO" id="GO:0005737">
    <property type="term" value="C:cytoplasm"/>
    <property type="evidence" value="ECO:0007669"/>
    <property type="project" value="UniProtKB-SubCell"/>
</dbReference>
<dbReference type="GO" id="GO:0048476">
    <property type="term" value="C:Holliday junction resolvase complex"/>
    <property type="evidence" value="ECO:0007669"/>
    <property type="project" value="UniProtKB-UniRule"/>
</dbReference>
<dbReference type="GO" id="GO:0008821">
    <property type="term" value="F:crossover junction DNA endonuclease activity"/>
    <property type="evidence" value="ECO:0007669"/>
    <property type="project" value="UniProtKB-UniRule"/>
</dbReference>
<dbReference type="GO" id="GO:0003677">
    <property type="term" value="F:DNA binding"/>
    <property type="evidence" value="ECO:0007669"/>
    <property type="project" value="UniProtKB-KW"/>
</dbReference>
<dbReference type="GO" id="GO:0000287">
    <property type="term" value="F:magnesium ion binding"/>
    <property type="evidence" value="ECO:0007669"/>
    <property type="project" value="UniProtKB-UniRule"/>
</dbReference>
<dbReference type="GO" id="GO:0006310">
    <property type="term" value="P:DNA recombination"/>
    <property type="evidence" value="ECO:0007669"/>
    <property type="project" value="UniProtKB-UniRule"/>
</dbReference>
<dbReference type="GO" id="GO:0006281">
    <property type="term" value="P:DNA repair"/>
    <property type="evidence" value="ECO:0007669"/>
    <property type="project" value="UniProtKB-UniRule"/>
</dbReference>
<dbReference type="CDD" id="cd16962">
    <property type="entry name" value="RuvC"/>
    <property type="match status" value="1"/>
</dbReference>
<dbReference type="FunFam" id="3.30.420.10:FF:000002">
    <property type="entry name" value="Crossover junction endodeoxyribonuclease RuvC"/>
    <property type="match status" value="1"/>
</dbReference>
<dbReference type="Gene3D" id="3.30.420.10">
    <property type="entry name" value="Ribonuclease H-like superfamily/Ribonuclease H"/>
    <property type="match status" value="1"/>
</dbReference>
<dbReference type="HAMAP" id="MF_00034">
    <property type="entry name" value="RuvC"/>
    <property type="match status" value="1"/>
</dbReference>
<dbReference type="InterPro" id="IPR012337">
    <property type="entry name" value="RNaseH-like_sf"/>
</dbReference>
<dbReference type="InterPro" id="IPR036397">
    <property type="entry name" value="RNaseH_sf"/>
</dbReference>
<dbReference type="InterPro" id="IPR020563">
    <property type="entry name" value="X-over_junc_endoDNase_Mg_BS"/>
</dbReference>
<dbReference type="InterPro" id="IPR002176">
    <property type="entry name" value="X-over_junc_endoDNase_RuvC"/>
</dbReference>
<dbReference type="NCBIfam" id="TIGR00228">
    <property type="entry name" value="ruvC"/>
    <property type="match status" value="1"/>
</dbReference>
<dbReference type="PANTHER" id="PTHR30194">
    <property type="entry name" value="CROSSOVER JUNCTION ENDODEOXYRIBONUCLEASE RUVC"/>
    <property type="match status" value="1"/>
</dbReference>
<dbReference type="PANTHER" id="PTHR30194:SF3">
    <property type="entry name" value="CROSSOVER JUNCTION ENDODEOXYRIBONUCLEASE RUVC"/>
    <property type="match status" value="1"/>
</dbReference>
<dbReference type="Pfam" id="PF02075">
    <property type="entry name" value="RuvC"/>
    <property type="match status" value="1"/>
</dbReference>
<dbReference type="PRINTS" id="PR00696">
    <property type="entry name" value="RSOLVASERUVC"/>
</dbReference>
<dbReference type="SUPFAM" id="SSF53098">
    <property type="entry name" value="Ribonuclease H-like"/>
    <property type="match status" value="1"/>
</dbReference>
<dbReference type="PROSITE" id="PS01321">
    <property type="entry name" value="RUVC"/>
    <property type="match status" value="1"/>
</dbReference>
<gene>
    <name evidence="1" type="primary">ruvC</name>
    <name type="ordered locus">Reut_A0486</name>
</gene>
<evidence type="ECO:0000255" key="1">
    <source>
        <dbReference type="HAMAP-Rule" id="MF_00034"/>
    </source>
</evidence>
<sequence length="181" mass="19088">MRILGIDPGLRTTGFGVLEKHGNKLSYIASGTIKSNGETDLPARLKTLFDGISEVARTYTPDCAAIEKVFVNVNPQSTLLLGQARGAAICGLVGQGLPVFEYTALQLKVAVVGYGRANKEQVQEMVMRLLSLPGRPSTDAADALGVAICHANGGDTLGTLSGLAPELVRKGMRVRRGRLIG</sequence>